<protein>
    <recommendedName>
        <fullName evidence="1">Large ribosomal subunit protein uL13</fullName>
    </recommendedName>
    <alternativeName>
        <fullName>60S ribosomal protein L13a</fullName>
    </alternativeName>
</protein>
<organism>
    <name type="scientific">Choristoneura parallela</name>
    <name type="common">Spotted fireworm moth</name>
    <dbReference type="NCBI Taxonomy" id="106495"/>
    <lineage>
        <taxon>Eukaryota</taxon>
        <taxon>Metazoa</taxon>
        <taxon>Ecdysozoa</taxon>
        <taxon>Arthropoda</taxon>
        <taxon>Hexapoda</taxon>
        <taxon>Insecta</taxon>
        <taxon>Pterygota</taxon>
        <taxon>Neoptera</taxon>
        <taxon>Endopterygota</taxon>
        <taxon>Lepidoptera</taxon>
        <taxon>Glossata</taxon>
        <taxon>Ditrysia</taxon>
        <taxon>Tortricoidea</taxon>
        <taxon>Tortricidae</taxon>
        <taxon>Tortricinae</taxon>
        <taxon>Choristoneura</taxon>
    </lineage>
</organism>
<dbReference type="EMBL" id="AF514334">
    <property type="protein sequence ID" value="AAM53949.1"/>
    <property type="molecule type" value="mRNA"/>
</dbReference>
<dbReference type="SMR" id="Q8MUR4"/>
<dbReference type="GO" id="GO:0022625">
    <property type="term" value="C:cytosolic large ribosomal subunit"/>
    <property type="evidence" value="ECO:0007669"/>
    <property type="project" value="TreeGrafter"/>
</dbReference>
<dbReference type="GO" id="GO:0003729">
    <property type="term" value="F:mRNA binding"/>
    <property type="evidence" value="ECO:0007669"/>
    <property type="project" value="TreeGrafter"/>
</dbReference>
<dbReference type="GO" id="GO:0003735">
    <property type="term" value="F:structural constituent of ribosome"/>
    <property type="evidence" value="ECO:0007669"/>
    <property type="project" value="InterPro"/>
</dbReference>
<dbReference type="GO" id="GO:0017148">
    <property type="term" value="P:negative regulation of translation"/>
    <property type="evidence" value="ECO:0007669"/>
    <property type="project" value="TreeGrafter"/>
</dbReference>
<dbReference type="GO" id="GO:0006412">
    <property type="term" value="P:translation"/>
    <property type="evidence" value="ECO:0007669"/>
    <property type="project" value="InterPro"/>
</dbReference>
<dbReference type="CDD" id="cd00392">
    <property type="entry name" value="Ribosomal_L13"/>
    <property type="match status" value="1"/>
</dbReference>
<dbReference type="FunFam" id="3.90.1180.10:FF:000002">
    <property type="entry name" value="60S ribosomal protein L16"/>
    <property type="match status" value="1"/>
</dbReference>
<dbReference type="Gene3D" id="6.10.250.3250">
    <property type="match status" value="1"/>
</dbReference>
<dbReference type="Gene3D" id="3.90.1180.10">
    <property type="entry name" value="Ribosomal protein L13"/>
    <property type="match status" value="1"/>
</dbReference>
<dbReference type="HAMAP" id="MF_01366">
    <property type="entry name" value="Ribosomal_uL13"/>
    <property type="match status" value="1"/>
</dbReference>
<dbReference type="InterPro" id="IPR005822">
    <property type="entry name" value="Ribosomal_uL13"/>
</dbReference>
<dbReference type="InterPro" id="IPR005755">
    <property type="entry name" value="Ribosomal_uL13_euk/arc"/>
</dbReference>
<dbReference type="InterPro" id="IPR036899">
    <property type="entry name" value="Ribosomal_uL13_sf"/>
</dbReference>
<dbReference type="NCBIfam" id="TIGR01077">
    <property type="entry name" value="L13_A_E"/>
    <property type="match status" value="1"/>
</dbReference>
<dbReference type="PANTHER" id="PTHR11545:SF3">
    <property type="entry name" value="LARGE RIBOSOMAL SUBUNIT PROTEIN UL13"/>
    <property type="match status" value="1"/>
</dbReference>
<dbReference type="PANTHER" id="PTHR11545">
    <property type="entry name" value="RIBOSOMAL PROTEIN L13"/>
    <property type="match status" value="1"/>
</dbReference>
<dbReference type="Pfam" id="PF00572">
    <property type="entry name" value="Ribosomal_L13"/>
    <property type="match status" value="1"/>
</dbReference>
<dbReference type="SUPFAM" id="SSF52161">
    <property type="entry name" value="Ribosomal protein L13"/>
    <property type="match status" value="1"/>
</dbReference>
<accession>Q8MUR4</accession>
<keyword id="KW-0687">Ribonucleoprotein</keyword>
<keyword id="KW-0689">Ribosomal protein</keyword>
<name>RL13A_CHOPR</name>
<reference key="1">
    <citation type="submission" date="2002-05" db="EMBL/GenBank/DDBJ databases">
        <title>Full-length ribosomal protein sequence from the pheromone gland of spotted fireworm moth (Choristoneura parallela).</title>
        <authorList>
            <person name="Liu W."/>
            <person name="Jiao H."/>
            <person name="Roelofs W.L."/>
        </authorList>
    </citation>
    <scope>NUCLEOTIDE SEQUENCE [MRNA]</scope>
</reference>
<feature type="chain" id="PRO_0000133775" description="Large ribosomal subunit protein uL13">
    <location>
        <begin position="1"/>
        <end position="204"/>
    </location>
</feature>
<proteinExistence type="evidence at transcript level"/>
<sequence>MTGFSNKAIVIDGRGHLLGRLAAVIAKVLLEGNKVVVVRCEQLNISGNFFRNKLKFMSFLRKRCNVNPARGPFHFRAPSKILWKTVRGMIPHKTERGKDALRRLRSYDGCPPPYDNRRRVVVPAALRVFCLKPGRKYCHVGRLSHEVGWKYREVVRKLEDKRKFKAVHKVAYERKLKKITKDAGAKVSKATAPFTAVIQSYGYN</sequence>
<evidence type="ECO:0000305" key="1"/>
<gene>
    <name type="primary">RpL13A</name>
</gene>
<comment type="similarity">
    <text evidence="1">Belongs to the universal ribosomal protein uL13 family.</text>
</comment>